<dbReference type="EC" id="2.5.1.7" evidence="1"/>
<dbReference type="EMBL" id="CP000927">
    <property type="protein sequence ID" value="ABZ72729.1"/>
    <property type="molecule type" value="Genomic_DNA"/>
</dbReference>
<dbReference type="SMR" id="B0T791"/>
<dbReference type="STRING" id="366602.Caul_3602"/>
<dbReference type="KEGG" id="cak:Caul_3602"/>
<dbReference type="eggNOG" id="COG0766">
    <property type="taxonomic scope" value="Bacteria"/>
</dbReference>
<dbReference type="HOGENOM" id="CLU_027387_0_0_5"/>
<dbReference type="OrthoDB" id="9803760at2"/>
<dbReference type="UniPathway" id="UPA00219"/>
<dbReference type="GO" id="GO:0005737">
    <property type="term" value="C:cytoplasm"/>
    <property type="evidence" value="ECO:0007669"/>
    <property type="project" value="UniProtKB-SubCell"/>
</dbReference>
<dbReference type="GO" id="GO:0008760">
    <property type="term" value="F:UDP-N-acetylglucosamine 1-carboxyvinyltransferase activity"/>
    <property type="evidence" value="ECO:0007669"/>
    <property type="project" value="UniProtKB-UniRule"/>
</dbReference>
<dbReference type="GO" id="GO:0051301">
    <property type="term" value="P:cell division"/>
    <property type="evidence" value="ECO:0007669"/>
    <property type="project" value="UniProtKB-KW"/>
</dbReference>
<dbReference type="GO" id="GO:0071555">
    <property type="term" value="P:cell wall organization"/>
    <property type="evidence" value="ECO:0007669"/>
    <property type="project" value="UniProtKB-KW"/>
</dbReference>
<dbReference type="GO" id="GO:0009252">
    <property type="term" value="P:peptidoglycan biosynthetic process"/>
    <property type="evidence" value="ECO:0007669"/>
    <property type="project" value="UniProtKB-UniRule"/>
</dbReference>
<dbReference type="GO" id="GO:0008360">
    <property type="term" value="P:regulation of cell shape"/>
    <property type="evidence" value="ECO:0007669"/>
    <property type="project" value="UniProtKB-KW"/>
</dbReference>
<dbReference type="GO" id="GO:0019277">
    <property type="term" value="P:UDP-N-acetylgalactosamine biosynthetic process"/>
    <property type="evidence" value="ECO:0007669"/>
    <property type="project" value="InterPro"/>
</dbReference>
<dbReference type="CDD" id="cd01555">
    <property type="entry name" value="UdpNAET"/>
    <property type="match status" value="1"/>
</dbReference>
<dbReference type="FunFam" id="3.65.10.10:FF:000001">
    <property type="entry name" value="UDP-N-acetylglucosamine 1-carboxyvinyltransferase"/>
    <property type="match status" value="1"/>
</dbReference>
<dbReference type="Gene3D" id="3.65.10.10">
    <property type="entry name" value="Enolpyruvate transferase domain"/>
    <property type="match status" value="2"/>
</dbReference>
<dbReference type="HAMAP" id="MF_00111">
    <property type="entry name" value="MurA"/>
    <property type="match status" value="1"/>
</dbReference>
<dbReference type="InterPro" id="IPR001986">
    <property type="entry name" value="Enolpyruvate_Tfrase_dom"/>
</dbReference>
<dbReference type="InterPro" id="IPR036968">
    <property type="entry name" value="Enolpyruvate_Tfrase_sf"/>
</dbReference>
<dbReference type="InterPro" id="IPR050068">
    <property type="entry name" value="MurA_subfamily"/>
</dbReference>
<dbReference type="InterPro" id="IPR013792">
    <property type="entry name" value="RNA3'P_cycl/enolpyr_Trfase_a/b"/>
</dbReference>
<dbReference type="InterPro" id="IPR005750">
    <property type="entry name" value="UDP_GlcNAc_COvinyl_MurA"/>
</dbReference>
<dbReference type="NCBIfam" id="TIGR01072">
    <property type="entry name" value="murA"/>
    <property type="match status" value="1"/>
</dbReference>
<dbReference type="NCBIfam" id="NF006873">
    <property type="entry name" value="PRK09369.1"/>
    <property type="match status" value="1"/>
</dbReference>
<dbReference type="PANTHER" id="PTHR43783">
    <property type="entry name" value="UDP-N-ACETYLGLUCOSAMINE 1-CARBOXYVINYLTRANSFERASE"/>
    <property type="match status" value="1"/>
</dbReference>
<dbReference type="PANTHER" id="PTHR43783:SF1">
    <property type="entry name" value="UDP-N-ACETYLGLUCOSAMINE 1-CARBOXYVINYLTRANSFERASE"/>
    <property type="match status" value="1"/>
</dbReference>
<dbReference type="Pfam" id="PF00275">
    <property type="entry name" value="EPSP_synthase"/>
    <property type="match status" value="1"/>
</dbReference>
<dbReference type="SUPFAM" id="SSF55205">
    <property type="entry name" value="EPT/RTPC-like"/>
    <property type="match status" value="1"/>
</dbReference>
<reference key="1">
    <citation type="submission" date="2008-01" db="EMBL/GenBank/DDBJ databases">
        <title>Complete sequence of chromosome of Caulobacter sp. K31.</title>
        <authorList>
            <consortium name="US DOE Joint Genome Institute"/>
            <person name="Copeland A."/>
            <person name="Lucas S."/>
            <person name="Lapidus A."/>
            <person name="Barry K."/>
            <person name="Glavina del Rio T."/>
            <person name="Dalin E."/>
            <person name="Tice H."/>
            <person name="Pitluck S."/>
            <person name="Bruce D."/>
            <person name="Goodwin L."/>
            <person name="Thompson L.S."/>
            <person name="Brettin T."/>
            <person name="Detter J.C."/>
            <person name="Han C."/>
            <person name="Schmutz J."/>
            <person name="Larimer F."/>
            <person name="Land M."/>
            <person name="Hauser L."/>
            <person name="Kyrpides N."/>
            <person name="Kim E."/>
            <person name="Stephens C."/>
            <person name="Richardson P."/>
        </authorList>
    </citation>
    <scope>NUCLEOTIDE SEQUENCE [LARGE SCALE GENOMIC DNA]</scope>
    <source>
        <strain>K31</strain>
    </source>
</reference>
<comment type="function">
    <text evidence="1">Cell wall formation. Adds enolpyruvyl to UDP-N-acetylglucosamine.</text>
</comment>
<comment type="catalytic activity">
    <reaction evidence="1">
        <text>phosphoenolpyruvate + UDP-N-acetyl-alpha-D-glucosamine = UDP-N-acetyl-3-O-(1-carboxyvinyl)-alpha-D-glucosamine + phosphate</text>
        <dbReference type="Rhea" id="RHEA:18681"/>
        <dbReference type="ChEBI" id="CHEBI:43474"/>
        <dbReference type="ChEBI" id="CHEBI:57705"/>
        <dbReference type="ChEBI" id="CHEBI:58702"/>
        <dbReference type="ChEBI" id="CHEBI:68483"/>
        <dbReference type="EC" id="2.5.1.7"/>
    </reaction>
</comment>
<comment type="pathway">
    <text evidence="1">Cell wall biogenesis; peptidoglycan biosynthesis.</text>
</comment>
<comment type="subcellular location">
    <subcellularLocation>
        <location evidence="1">Cytoplasm</location>
    </subcellularLocation>
</comment>
<comment type="similarity">
    <text evidence="1">Belongs to the EPSP synthase family. MurA subfamily.</text>
</comment>
<protein>
    <recommendedName>
        <fullName evidence="1">UDP-N-acetylglucosamine 1-carboxyvinyltransferase</fullName>
        <ecNumber evidence="1">2.5.1.7</ecNumber>
    </recommendedName>
    <alternativeName>
        <fullName evidence="1">Enoylpyruvate transferase</fullName>
    </alternativeName>
    <alternativeName>
        <fullName evidence="1">UDP-N-acetylglucosamine enolpyruvyl transferase</fullName>
        <shortName evidence="1">EPT</shortName>
    </alternativeName>
</protein>
<gene>
    <name evidence="1" type="primary">murA</name>
    <name type="ordered locus">Caul_3602</name>
</gene>
<proteinExistence type="inferred from homology"/>
<name>MURA_CAUSK</name>
<organism>
    <name type="scientific">Caulobacter sp. (strain K31)</name>
    <dbReference type="NCBI Taxonomy" id="366602"/>
    <lineage>
        <taxon>Bacteria</taxon>
        <taxon>Pseudomonadati</taxon>
        <taxon>Pseudomonadota</taxon>
        <taxon>Alphaproteobacteria</taxon>
        <taxon>Caulobacterales</taxon>
        <taxon>Caulobacteraceae</taxon>
        <taxon>Caulobacter</taxon>
    </lineage>
</organism>
<keyword id="KW-0131">Cell cycle</keyword>
<keyword id="KW-0132">Cell division</keyword>
<keyword id="KW-0133">Cell shape</keyword>
<keyword id="KW-0961">Cell wall biogenesis/degradation</keyword>
<keyword id="KW-0963">Cytoplasm</keyword>
<keyword id="KW-0573">Peptidoglycan synthesis</keyword>
<keyword id="KW-0670">Pyruvate</keyword>
<keyword id="KW-0808">Transferase</keyword>
<accession>B0T791</accession>
<feature type="chain" id="PRO_1000075966" description="UDP-N-acetylglucosamine 1-carboxyvinyltransferase">
    <location>
        <begin position="1"/>
        <end position="432"/>
    </location>
</feature>
<feature type="active site" description="Proton donor" evidence="1">
    <location>
        <position position="120"/>
    </location>
</feature>
<feature type="binding site" evidence="1">
    <location>
        <begin position="22"/>
        <end position="23"/>
    </location>
    <ligand>
        <name>phosphoenolpyruvate</name>
        <dbReference type="ChEBI" id="CHEBI:58702"/>
    </ligand>
</feature>
<feature type="binding site" evidence="1">
    <location>
        <position position="96"/>
    </location>
    <ligand>
        <name>UDP-N-acetyl-alpha-D-glucosamine</name>
        <dbReference type="ChEBI" id="CHEBI:57705"/>
    </ligand>
</feature>
<feature type="binding site" evidence="1">
    <location>
        <begin position="125"/>
        <end position="129"/>
    </location>
    <ligand>
        <name>UDP-N-acetyl-alpha-D-glucosamine</name>
        <dbReference type="ChEBI" id="CHEBI:57705"/>
    </ligand>
</feature>
<feature type="binding site" evidence="1">
    <location>
        <position position="310"/>
    </location>
    <ligand>
        <name>UDP-N-acetyl-alpha-D-glucosamine</name>
        <dbReference type="ChEBI" id="CHEBI:57705"/>
    </ligand>
</feature>
<feature type="binding site" evidence="1">
    <location>
        <position position="332"/>
    </location>
    <ligand>
        <name>UDP-N-acetyl-alpha-D-glucosamine</name>
        <dbReference type="ChEBI" id="CHEBI:57705"/>
    </ligand>
</feature>
<feature type="modified residue" description="2-(S-cysteinyl)pyruvic acid O-phosphothioketal" evidence="1">
    <location>
        <position position="120"/>
    </location>
</feature>
<evidence type="ECO:0000255" key="1">
    <source>
        <dbReference type="HAMAP-Rule" id="MF_00111"/>
    </source>
</evidence>
<sequence>MDRIAITGGAQLNGIIPVSGAKNSAIKLMAASLLTDQPLRLTNMPRLADTKFLGKLLTRLGAQVDEREGLDGSETVLHAAEITSGFAPYDLVRQMRASFNVLGPLIARTGQAKVSLPGGCTIGARPVDLHLQALEALGAKIDLHEGYVYAQAPRGLKGAEITFPFVSVGATEHAMLAAVLADGVTHIHNAACEPELLDLQICLNAMGAKVEGAGTPTITITGVAKLHGATHSVIPDRIEMGTYAVAAAMAGGEVQLTRARPELIDSLLVKLEEAGAGVVRTEDGVIIKRDGTRLNAVDVETQPYPGFATDLQAQFMALMTTAKGESRIRETIFENRFMHAPELMRLGADISVSGGEAIVRGVDRLEGAEVMATDLRASVSLVIAGLVARGETTVSRIYHLDRGFERLEEKLGACGAQVRRIKGDAEGGPDHD</sequence>